<protein>
    <recommendedName>
        <fullName>Egg-lysin</fullName>
    </recommendedName>
    <alternativeName>
        <fullName>Sperm-lysin</fullName>
    </alternativeName>
</protein>
<reference key="1">
    <citation type="journal article" date="1992" name="Biol. Bull.">
        <title>The divergence of species-specific abalone sperm lysins is promoted by positive Darwinian selection.</title>
        <authorList>
            <person name="Lee Y.H."/>
            <person name="Vacquier V.D."/>
        </authorList>
    </citation>
    <scope>NUCLEOTIDE SEQUENCE [MRNA]</scope>
</reference>
<proteinExistence type="evidence at transcript level"/>
<organism>
    <name type="scientific">Haliotis walallensis</name>
    <name type="common">Flat abalone</name>
    <name type="synonym">Haliotis fulgens var. walallensis</name>
    <dbReference type="NCBI Taxonomy" id="6459"/>
    <lineage>
        <taxon>Eukaryota</taxon>
        <taxon>Metazoa</taxon>
        <taxon>Spiralia</taxon>
        <taxon>Lophotrochozoa</taxon>
        <taxon>Mollusca</taxon>
        <taxon>Gastropoda</taxon>
        <taxon>Vetigastropoda</taxon>
        <taxon>Lepetellida</taxon>
        <taxon>Haliotoidea</taxon>
        <taxon>Haliotidae</taxon>
        <taxon>Haliotis</taxon>
    </lineage>
</organism>
<accession>Q01384</accession>
<name>ELYS_HALWA</name>
<feature type="signal peptide">
    <location>
        <begin position="1"/>
        <end position="18"/>
    </location>
</feature>
<feature type="chain" id="PRO_0000021172" description="Egg-lysin">
    <location>
        <begin position="19"/>
        <end position="154"/>
    </location>
</feature>
<comment type="function">
    <text>Dissolves the egg vitelline layer nonenzymatically during fertilization. It creates a hole of about 3 mu-m in diameter through which the sperm pass.</text>
</comment>
<comment type="subunit">
    <text>Homodimer.</text>
</comment>
<comment type="tissue specificity">
    <text>Sperm.</text>
</comment>
<dbReference type="EMBL" id="M59969">
    <property type="protein sequence ID" value="AAA29198.1"/>
    <property type="molecule type" value="mRNA"/>
</dbReference>
<dbReference type="SMR" id="Q01384"/>
<dbReference type="GO" id="GO:0043160">
    <property type="term" value="C:acrosomal lumen"/>
    <property type="evidence" value="ECO:0000250"/>
    <property type="project" value="UniProtKB"/>
</dbReference>
<dbReference type="GO" id="GO:0007338">
    <property type="term" value="P:single fertilization"/>
    <property type="evidence" value="ECO:0000250"/>
    <property type="project" value="UniProtKB"/>
</dbReference>
<dbReference type="CDD" id="cd00243">
    <property type="entry name" value="Lysin-Sp18"/>
    <property type="match status" value="1"/>
</dbReference>
<dbReference type="FunFam" id="1.20.150.10:FF:000001">
    <property type="entry name" value="Egg-lysin"/>
    <property type="match status" value="1"/>
</dbReference>
<dbReference type="Gene3D" id="1.20.150.10">
    <property type="entry name" value="Fertilization protein"/>
    <property type="match status" value="1"/>
</dbReference>
<dbReference type="InterPro" id="IPR001379">
    <property type="entry name" value="Egg_lysin"/>
</dbReference>
<dbReference type="InterPro" id="IPR035916">
    <property type="entry name" value="Egg_lysin_sf"/>
</dbReference>
<dbReference type="Pfam" id="PF01303">
    <property type="entry name" value="Egg_lysin"/>
    <property type="match status" value="1"/>
</dbReference>
<dbReference type="PRINTS" id="PR01882">
    <property type="entry name" value="LYSIN"/>
</dbReference>
<dbReference type="SUPFAM" id="SSF47082">
    <property type="entry name" value="Fertilization protein"/>
    <property type="match status" value="1"/>
</dbReference>
<sequence>MKLLVLCIFAMMATLAMSRRWNFVTPREVNKAFEVALKVQIIAGFDRTLVKWLRAHGRSLSHVQKKALYFVNRRYMQTHWANYMLWVNKKIDALGRTAVVADYTRLGAEIGRRIDMDYFYNFLKGRNMIPKYLPYMEEINRMRSADIPIRYRGK</sequence>
<keyword id="KW-0278">Fertilization</keyword>
<keyword id="KW-0732">Signal</keyword>